<organism>
    <name type="scientific">Drosophila melanogaster</name>
    <name type="common">Fruit fly</name>
    <dbReference type="NCBI Taxonomy" id="7227"/>
    <lineage>
        <taxon>Eukaryota</taxon>
        <taxon>Metazoa</taxon>
        <taxon>Ecdysozoa</taxon>
        <taxon>Arthropoda</taxon>
        <taxon>Hexapoda</taxon>
        <taxon>Insecta</taxon>
        <taxon>Pterygota</taxon>
        <taxon>Neoptera</taxon>
        <taxon>Endopterygota</taxon>
        <taxon>Diptera</taxon>
        <taxon>Brachycera</taxon>
        <taxon>Muscomorpha</taxon>
        <taxon>Ephydroidea</taxon>
        <taxon>Drosophilidae</taxon>
        <taxon>Drosophila</taxon>
        <taxon>Sophophora</taxon>
    </lineage>
</organism>
<gene>
    <name evidence="7" type="primary">Sec8</name>
    <name evidence="7" type="ORF">CG2095</name>
</gene>
<comment type="function">
    <text evidence="4">Component of the exocyst complex involved in the docking of exocytic vesicles with fusion sites on the plasma membrane. Involved in regulation of synaptic microtubule formation, and also regulation of synaptic growth and glutamate receptor trafficking. Does not appear to be required for basal neurotransmission.</text>
</comment>
<comment type="subunit">
    <text evidence="1">The exocyst complex is composed of Sec3/Exoc1, Sec5/Exoc2, Sec6/Exoc3, Sec8/Exoc4, Sec10/Exoc5, Sec15/Exoc6, exo70/Exoc7 and Exo84/Exoc8.</text>
</comment>
<comment type="tissue specificity">
    <text evidence="4">Abundant in the embryonic and larval glutamatergic neuromuscular junctions (NMJs), pre and postsynaptically.</text>
</comment>
<comment type="developmental stage">
    <text evidence="4">Expressed both maternally and zygotically.</text>
</comment>
<comment type="disruption phenotype">
    <text evidence="4">Flies exhibit defects in development of glutamatergic neuromuscular junctions (NMJs): increase in synaptic microtubule density.</text>
</comment>
<comment type="similarity">
    <text evidence="6">Belongs to the SEC8 family.</text>
</comment>
<evidence type="ECO:0000250" key="1"/>
<evidence type="ECO:0000255" key="2"/>
<evidence type="ECO:0000256" key="3">
    <source>
        <dbReference type="SAM" id="MobiDB-lite"/>
    </source>
</evidence>
<evidence type="ECO:0000269" key="4">
    <source>
    </source>
</evidence>
<evidence type="ECO:0000269" key="5">
    <source>
    </source>
</evidence>
<evidence type="ECO:0000305" key="6"/>
<evidence type="ECO:0000312" key="7">
    <source>
        <dbReference type="FlyBase" id="FBgn0266672"/>
    </source>
</evidence>
<name>EXOC4_DROME</name>
<feature type="chain" id="PRO_0000118938" description="Exocyst complex component 4">
    <location>
        <begin position="1"/>
        <end position="985"/>
    </location>
</feature>
<feature type="region of interest" description="Disordered" evidence="3">
    <location>
        <begin position="434"/>
        <end position="480"/>
    </location>
</feature>
<feature type="coiled-coil region" evidence="2">
    <location>
        <begin position="36"/>
        <end position="70"/>
    </location>
</feature>
<feature type="modified residue" description="Phosphoserine" evidence="5">
    <location>
        <position position="235"/>
    </location>
</feature>
<feature type="modified residue" description="Phosphoserine" evidence="5">
    <location>
        <position position="456"/>
    </location>
</feature>
<feature type="modified residue" description="Phosphoserine" evidence="5">
    <location>
        <position position="459"/>
    </location>
</feature>
<feature type="modified residue" description="Phosphoserine" evidence="5">
    <location>
        <position position="682"/>
    </location>
</feature>
<feature type="modified residue" description="Phosphoserine" evidence="5">
    <location>
        <position position="686"/>
    </location>
</feature>
<feature type="sequence conflict" description="In Ref. 1; AAW83821 and 4; AAM50314." evidence="6" ref="1 4">
    <original>M</original>
    <variation>T</variation>
    <location>
        <position position="118"/>
    </location>
</feature>
<feature type="sequence conflict" description="In Ref. 4; AAM50314." evidence="6" ref="4">
    <original>E</original>
    <variation>D</variation>
    <location>
        <position position="209"/>
    </location>
</feature>
<feature type="sequence conflict" description="In Ref. 1; AAW83821." evidence="6" ref="1">
    <original>D</original>
    <variation>N</variation>
    <location>
        <position position="327"/>
    </location>
</feature>
<feature type="sequence conflict" description="In Ref. 4; AAM50314." evidence="6" ref="4">
    <original>S</original>
    <variation>T</variation>
    <location>
        <position position="333"/>
    </location>
</feature>
<feature type="sequence conflict" description="In Ref. 1; AAW83821 and 4; AAM50314." evidence="6" ref="1 4">
    <original>Y</original>
    <variation>S</variation>
    <location>
        <position position="668"/>
    </location>
</feature>
<protein>
    <recommendedName>
        <fullName>Exocyst complex component 4</fullName>
    </recommendedName>
    <alternativeName>
        <fullName>Exocyst complex component Sec8</fullName>
    </alternativeName>
</protein>
<dbReference type="EMBL" id="AY905551">
    <property type="protein sequence ID" value="AAW83821.1"/>
    <property type="molecule type" value="mRNA"/>
</dbReference>
<dbReference type="EMBL" id="AE014297">
    <property type="protein sequence ID" value="AAF51959.3"/>
    <property type="molecule type" value="Genomic_DNA"/>
</dbReference>
<dbReference type="EMBL" id="AY119660">
    <property type="protein sequence ID" value="AAM50314.1"/>
    <property type="molecule type" value="mRNA"/>
</dbReference>
<dbReference type="RefSeq" id="NP_730996.2">
    <property type="nucleotide sequence ID" value="NM_169098.4"/>
</dbReference>
<dbReference type="SMR" id="Q9VNH6"/>
<dbReference type="BioGRID" id="65917">
    <property type="interactions" value="10"/>
</dbReference>
<dbReference type="ComplexPortal" id="CPX-2465">
    <property type="entry name" value="Exocyst"/>
</dbReference>
<dbReference type="DIP" id="DIP-21395N"/>
<dbReference type="FunCoup" id="Q9VNH6">
    <property type="interactions" value="1764"/>
</dbReference>
<dbReference type="IntAct" id="Q9VNH6">
    <property type="interactions" value="7"/>
</dbReference>
<dbReference type="STRING" id="7227.FBpp0078326"/>
<dbReference type="iPTMnet" id="Q9VNH6"/>
<dbReference type="PaxDb" id="7227-FBpp0078326"/>
<dbReference type="EnsemblMetazoa" id="FBtr0078677">
    <property type="protein sequence ID" value="FBpp0078326"/>
    <property type="gene ID" value="FBgn0266672"/>
</dbReference>
<dbReference type="GeneID" id="40712"/>
<dbReference type="KEGG" id="dme:Dmel_CG2095"/>
<dbReference type="UCSC" id="CG2095-RA">
    <property type="organism name" value="d. melanogaster"/>
</dbReference>
<dbReference type="AGR" id="FB:FBgn0266672"/>
<dbReference type="CTD" id="40712"/>
<dbReference type="FlyBase" id="FBgn0266672">
    <property type="gene designation" value="Sec8"/>
</dbReference>
<dbReference type="VEuPathDB" id="VectorBase:FBgn0266672"/>
<dbReference type="eggNOG" id="KOG3691">
    <property type="taxonomic scope" value="Eukaryota"/>
</dbReference>
<dbReference type="HOGENOM" id="CLU_012416_0_0_1"/>
<dbReference type="InParanoid" id="Q9VNH6"/>
<dbReference type="OMA" id="HMEVRCR"/>
<dbReference type="OrthoDB" id="272977at2759"/>
<dbReference type="PhylomeDB" id="Q9VNH6"/>
<dbReference type="Reactome" id="R-DME-264876">
    <property type="pathway name" value="Insulin processing"/>
</dbReference>
<dbReference type="Reactome" id="R-DME-5620916">
    <property type="pathway name" value="VxPx cargo-targeting to cilium"/>
</dbReference>
<dbReference type="BioGRID-ORCS" id="40712">
    <property type="hits" value="0 hits in 1 CRISPR screen"/>
</dbReference>
<dbReference type="GenomeRNAi" id="40712"/>
<dbReference type="PRO" id="PR:Q9VNH6"/>
<dbReference type="Proteomes" id="UP000000803">
    <property type="component" value="Chromosome 3R"/>
</dbReference>
<dbReference type="Bgee" id="FBgn0266672">
    <property type="expression patterns" value="Expressed in embryonic/larval hemocyte (Drosophila) and 131 other cell types or tissues"/>
</dbReference>
<dbReference type="ExpressionAtlas" id="Q9VNH6">
    <property type="expression patterns" value="baseline and differential"/>
</dbReference>
<dbReference type="GO" id="GO:0016324">
    <property type="term" value="C:apical plasma membrane"/>
    <property type="evidence" value="ECO:0000314"/>
    <property type="project" value="FlyBase"/>
</dbReference>
<dbReference type="GO" id="GO:0009925">
    <property type="term" value="C:basal plasma membrane"/>
    <property type="evidence" value="ECO:0000314"/>
    <property type="project" value="FlyBase"/>
</dbReference>
<dbReference type="GO" id="GO:0005737">
    <property type="term" value="C:cytoplasm"/>
    <property type="evidence" value="ECO:0000314"/>
    <property type="project" value="FlyBase"/>
</dbReference>
<dbReference type="GO" id="GO:0000145">
    <property type="term" value="C:exocyst"/>
    <property type="evidence" value="ECO:0000314"/>
    <property type="project" value="FlyBase"/>
</dbReference>
<dbReference type="GO" id="GO:0032584">
    <property type="term" value="C:growth cone membrane"/>
    <property type="evidence" value="ECO:0000318"/>
    <property type="project" value="GO_Central"/>
</dbReference>
<dbReference type="GO" id="GO:0016020">
    <property type="term" value="C:membrane"/>
    <property type="evidence" value="ECO:0000314"/>
    <property type="project" value="FlyBase"/>
</dbReference>
<dbReference type="GO" id="GO:0005886">
    <property type="term" value="C:plasma membrane"/>
    <property type="evidence" value="ECO:0000314"/>
    <property type="project" value="FlyBase"/>
</dbReference>
<dbReference type="GO" id="GO:0098793">
    <property type="term" value="C:presynapse"/>
    <property type="evidence" value="ECO:0007669"/>
    <property type="project" value="GOC"/>
</dbReference>
<dbReference type="GO" id="GO:0016028">
    <property type="term" value="C:rhabdomere"/>
    <property type="evidence" value="ECO:0000314"/>
    <property type="project" value="FlyBase"/>
</dbReference>
<dbReference type="GO" id="GO:0045202">
    <property type="term" value="C:synapse"/>
    <property type="evidence" value="ECO:0000318"/>
    <property type="project" value="GO_Central"/>
</dbReference>
<dbReference type="GO" id="GO:0000916">
    <property type="term" value="P:actomyosin contractile ring contraction"/>
    <property type="evidence" value="ECO:0000315"/>
    <property type="project" value="FlyBase"/>
</dbReference>
<dbReference type="GO" id="GO:0007298">
    <property type="term" value="P:border follicle cell migration"/>
    <property type="evidence" value="ECO:0000315"/>
    <property type="project" value="FlyBase"/>
</dbReference>
<dbReference type="GO" id="GO:0007268">
    <property type="term" value="P:chemical synaptic transmission"/>
    <property type="evidence" value="ECO:0000318"/>
    <property type="project" value="GO_Central"/>
</dbReference>
<dbReference type="GO" id="GO:0006887">
    <property type="term" value="P:exocytosis"/>
    <property type="evidence" value="ECO:0000318"/>
    <property type="project" value="GO_Central"/>
</dbReference>
<dbReference type="GO" id="GO:0006893">
    <property type="term" value="P:Golgi to plasma membrane transport"/>
    <property type="evidence" value="ECO:0000318"/>
    <property type="project" value="GO_Central"/>
</dbReference>
<dbReference type="GO" id="GO:0007110">
    <property type="term" value="P:meiosis I cytokinesis"/>
    <property type="evidence" value="ECO:0000315"/>
    <property type="project" value="FlyBase"/>
</dbReference>
<dbReference type="GO" id="GO:0007111">
    <property type="term" value="P:meiosis II cytokinesis"/>
    <property type="evidence" value="ECO:0000315"/>
    <property type="project" value="FlyBase"/>
</dbReference>
<dbReference type="GO" id="GO:0000212">
    <property type="term" value="P:meiotic spindle organization"/>
    <property type="evidence" value="ECO:0000315"/>
    <property type="project" value="FlyBase"/>
</dbReference>
<dbReference type="GO" id="GO:0007269">
    <property type="term" value="P:neurotransmitter secretion"/>
    <property type="evidence" value="ECO:0000303"/>
    <property type="project" value="FlyBase"/>
</dbReference>
<dbReference type="GO" id="GO:0007009">
    <property type="term" value="P:plasma membrane organization"/>
    <property type="evidence" value="ECO:0000314"/>
    <property type="project" value="FlyBase"/>
</dbReference>
<dbReference type="GO" id="GO:0045887">
    <property type="term" value="P:positive regulation of synaptic assembly at neuromuscular junction"/>
    <property type="evidence" value="ECO:0000315"/>
    <property type="project" value="UniProtKB"/>
</dbReference>
<dbReference type="GO" id="GO:0015031">
    <property type="term" value="P:protein transport"/>
    <property type="evidence" value="ECO:0007669"/>
    <property type="project" value="UniProtKB-KW"/>
</dbReference>
<dbReference type="GO" id="GO:0050803">
    <property type="term" value="P:regulation of synapse structure or activity"/>
    <property type="evidence" value="ECO:0000315"/>
    <property type="project" value="FlyBase"/>
</dbReference>
<dbReference type="GO" id="GO:0007286">
    <property type="term" value="P:spermatid development"/>
    <property type="evidence" value="ECO:0000315"/>
    <property type="project" value="FlyBase"/>
</dbReference>
<dbReference type="GO" id="GO:0046718">
    <property type="term" value="P:symbiont entry into host cell"/>
    <property type="evidence" value="ECO:0007001"/>
    <property type="project" value="FlyBase"/>
</dbReference>
<dbReference type="GO" id="GO:0016081">
    <property type="term" value="P:synaptic vesicle docking"/>
    <property type="evidence" value="ECO:0000303"/>
    <property type="project" value="FlyBase"/>
</dbReference>
<dbReference type="GO" id="GO:0016080">
    <property type="term" value="P:synaptic vesicle targeting"/>
    <property type="evidence" value="ECO:0000303"/>
    <property type="project" value="FlyBase"/>
</dbReference>
<dbReference type="GO" id="GO:0090522">
    <property type="term" value="P:vesicle tethering involved in exocytosis"/>
    <property type="evidence" value="ECO:0000305"/>
    <property type="project" value="FlyBase"/>
</dbReference>
<dbReference type="GO" id="GO:0016192">
    <property type="term" value="P:vesicle-mediated transport"/>
    <property type="evidence" value="ECO:0000250"/>
    <property type="project" value="FlyBase"/>
</dbReference>
<dbReference type="InterPro" id="IPR014775">
    <property type="entry name" value="L27_C"/>
</dbReference>
<dbReference type="InterPro" id="IPR039682">
    <property type="entry name" value="Sec8/EXOC4"/>
</dbReference>
<dbReference type="InterPro" id="IPR007191">
    <property type="entry name" value="Sec8_exocyst_N"/>
</dbReference>
<dbReference type="PANTHER" id="PTHR14146">
    <property type="entry name" value="EXOCYST COMPLEX COMPONENT 4"/>
    <property type="match status" value="1"/>
</dbReference>
<dbReference type="PANTHER" id="PTHR14146:SF0">
    <property type="entry name" value="EXOCYST COMPLEX COMPONENT 4"/>
    <property type="match status" value="1"/>
</dbReference>
<dbReference type="Pfam" id="PF02828">
    <property type="entry name" value="L27"/>
    <property type="match status" value="1"/>
</dbReference>
<dbReference type="Pfam" id="PF04048">
    <property type="entry name" value="Sec8_N"/>
    <property type="match status" value="1"/>
</dbReference>
<proteinExistence type="evidence at protein level"/>
<sequence length="985" mass="111667">MDAPPPTKPPRGVKYGKDESAGCGFLVNVIKSLGFSETTEERQKEKQKIEAEFKRSDLRLNELVSRHDQQLTQVLPLFSQVSSEVTASRERIHAVKENLGVCKRLLQCRRDELRKMWMDAVQHKYVLEMLEQIQELRKVPQRVVGYTAKRQYLHASKALTDALTTLNGPLQAVEGLSDLRTDLQTRRQQLYQRLHEELVTQVYTNSANEALSSFQRTNSSRLNSSFTRGIGARRSTDRIEANARVRKALAEMAQSFDLDKAEVIEDADLIYPELSMSYFVAIIVESFGMLHKVPDSLETLRVQIQTELLNVVRHTTHQLSVSGATADTNPLLSLLEVIFKQFKAIAKTHSLLLKNYLSVGQKYSVVGPQPYDLTDFWAQAQSVLQLLLTDYLDIQNAAADESAQTGFSEPTSNINSYFLRRKVPSTKRSMFKFDKSSHVGTSNNSDAFKEHRRNASDASVDDNLAGQLGGSGKGSTSGLFPHEKKQREKILICTPDQSIITKVYLPLMGYIKEIENFMKCKPGQPCSLHDFLDNYIKDTFLTKGHNRNLQLTIESLSKNQDAWRTIISPEEIKALNLSRPLLQSTVMVERRLMETKNLIQDLPCYSEDLLKMVCALLKAYREICQAAYRGIVQPDSEDKRIYSVAWLKDEDISRFLKTLPNWTDLKTYSQKSRHNRKLHRGSFEPSEEESPLQVQQRNIREAEMLTSNLGEGGITQQEILVEISVLKELAILQESMEWFSCRVSEFANDLRRPLVNGLNAVPAECGADIAVKDGTIKVMTNLALEFDELANTCLLVLHLEVRVQCFHYLRSKSSVRTNSYVGSKDDILEPDRQVQVLTKRLSEMDEAFSATLHPRKTRYIFEGLAHLASRILIQASNYLEHIDQITVQRMCRNAIALQQTLSNITASREVALDQARHFYELLCMEPDEILNALLERGTQFSEMQLLNALQLSCKSFGITDANLLASYQQKLSDILGAKPSKGVVV</sequence>
<accession>Q9VNH6</accession>
<accession>Q5ECP5</accession>
<keyword id="KW-0175">Coiled coil</keyword>
<keyword id="KW-0268">Exocytosis</keyword>
<keyword id="KW-0597">Phosphoprotein</keyword>
<keyword id="KW-0653">Protein transport</keyword>
<keyword id="KW-1185">Reference proteome</keyword>
<keyword id="KW-0813">Transport</keyword>
<reference key="1">
    <citation type="journal article" date="2005" name="BMC Biol.">
        <title>Increased synaptic microtubules and altered synapse development in Drosophila sec8 mutants.</title>
        <authorList>
            <person name="Liebl F.L.W."/>
            <person name="Chen K."/>
            <person name="Karr J."/>
            <person name="Sheng Q."/>
            <person name="Featherstone D.E."/>
        </authorList>
    </citation>
    <scope>NUCLEOTIDE SEQUENCE [MRNA]</scope>
    <scope>FUNCTION</scope>
    <scope>TISSUE SPECIFICITY</scope>
    <scope>DEVELOPMENTAL STAGE</scope>
    <scope>DISRUPTION PHENOTYPE</scope>
    <source>
        <strain>Oregon-R</strain>
    </source>
</reference>
<reference key="2">
    <citation type="journal article" date="2000" name="Science">
        <title>The genome sequence of Drosophila melanogaster.</title>
        <authorList>
            <person name="Adams M.D."/>
            <person name="Celniker S.E."/>
            <person name="Holt R.A."/>
            <person name="Evans C.A."/>
            <person name="Gocayne J.D."/>
            <person name="Amanatides P.G."/>
            <person name="Scherer S.E."/>
            <person name="Li P.W."/>
            <person name="Hoskins R.A."/>
            <person name="Galle R.F."/>
            <person name="George R.A."/>
            <person name="Lewis S.E."/>
            <person name="Richards S."/>
            <person name="Ashburner M."/>
            <person name="Henderson S.N."/>
            <person name="Sutton G.G."/>
            <person name="Wortman J.R."/>
            <person name="Yandell M.D."/>
            <person name="Zhang Q."/>
            <person name="Chen L.X."/>
            <person name="Brandon R.C."/>
            <person name="Rogers Y.-H.C."/>
            <person name="Blazej R.G."/>
            <person name="Champe M."/>
            <person name="Pfeiffer B.D."/>
            <person name="Wan K.H."/>
            <person name="Doyle C."/>
            <person name="Baxter E.G."/>
            <person name="Helt G."/>
            <person name="Nelson C.R."/>
            <person name="Miklos G.L.G."/>
            <person name="Abril J.F."/>
            <person name="Agbayani A."/>
            <person name="An H.-J."/>
            <person name="Andrews-Pfannkoch C."/>
            <person name="Baldwin D."/>
            <person name="Ballew R.M."/>
            <person name="Basu A."/>
            <person name="Baxendale J."/>
            <person name="Bayraktaroglu L."/>
            <person name="Beasley E.M."/>
            <person name="Beeson K.Y."/>
            <person name="Benos P.V."/>
            <person name="Berman B.P."/>
            <person name="Bhandari D."/>
            <person name="Bolshakov S."/>
            <person name="Borkova D."/>
            <person name="Botchan M.R."/>
            <person name="Bouck J."/>
            <person name="Brokstein P."/>
            <person name="Brottier P."/>
            <person name="Burtis K.C."/>
            <person name="Busam D.A."/>
            <person name="Butler H."/>
            <person name="Cadieu E."/>
            <person name="Center A."/>
            <person name="Chandra I."/>
            <person name="Cherry J.M."/>
            <person name="Cawley S."/>
            <person name="Dahlke C."/>
            <person name="Davenport L.B."/>
            <person name="Davies P."/>
            <person name="de Pablos B."/>
            <person name="Delcher A."/>
            <person name="Deng Z."/>
            <person name="Mays A.D."/>
            <person name="Dew I."/>
            <person name="Dietz S.M."/>
            <person name="Dodson K."/>
            <person name="Doup L.E."/>
            <person name="Downes M."/>
            <person name="Dugan-Rocha S."/>
            <person name="Dunkov B.C."/>
            <person name="Dunn P."/>
            <person name="Durbin K.J."/>
            <person name="Evangelista C.C."/>
            <person name="Ferraz C."/>
            <person name="Ferriera S."/>
            <person name="Fleischmann W."/>
            <person name="Fosler C."/>
            <person name="Gabrielian A.E."/>
            <person name="Garg N.S."/>
            <person name="Gelbart W.M."/>
            <person name="Glasser K."/>
            <person name="Glodek A."/>
            <person name="Gong F."/>
            <person name="Gorrell J.H."/>
            <person name="Gu Z."/>
            <person name="Guan P."/>
            <person name="Harris M."/>
            <person name="Harris N.L."/>
            <person name="Harvey D.A."/>
            <person name="Heiman T.J."/>
            <person name="Hernandez J.R."/>
            <person name="Houck J."/>
            <person name="Hostin D."/>
            <person name="Houston K.A."/>
            <person name="Howland T.J."/>
            <person name="Wei M.-H."/>
            <person name="Ibegwam C."/>
            <person name="Jalali M."/>
            <person name="Kalush F."/>
            <person name="Karpen G.H."/>
            <person name="Ke Z."/>
            <person name="Kennison J.A."/>
            <person name="Ketchum K.A."/>
            <person name="Kimmel B.E."/>
            <person name="Kodira C.D."/>
            <person name="Kraft C.L."/>
            <person name="Kravitz S."/>
            <person name="Kulp D."/>
            <person name="Lai Z."/>
            <person name="Lasko P."/>
            <person name="Lei Y."/>
            <person name="Levitsky A.A."/>
            <person name="Li J.H."/>
            <person name="Li Z."/>
            <person name="Liang Y."/>
            <person name="Lin X."/>
            <person name="Liu X."/>
            <person name="Mattei B."/>
            <person name="McIntosh T.C."/>
            <person name="McLeod M.P."/>
            <person name="McPherson D."/>
            <person name="Merkulov G."/>
            <person name="Milshina N.V."/>
            <person name="Mobarry C."/>
            <person name="Morris J."/>
            <person name="Moshrefi A."/>
            <person name="Mount S.M."/>
            <person name="Moy M."/>
            <person name="Murphy B."/>
            <person name="Murphy L."/>
            <person name="Muzny D.M."/>
            <person name="Nelson D.L."/>
            <person name="Nelson D.R."/>
            <person name="Nelson K.A."/>
            <person name="Nixon K."/>
            <person name="Nusskern D.R."/>
            <person name="Pacleb J.M."/>
            <person name="Palazzolo M."/>
            <person name="Pittman G.S."/>
            <person name="Pan S."/>
            <person name="Pollard J."/>
            <person name="Puri V."/>
            <person name="Reese M.G."/>
            <person name="Reinert K."/>
            <person name="Remington K."/>
            <person name="Saunders R.D.C."/>
            <person name="Scheeler F."/>
            <person name="Shen H."/>
            <person name="Shue B.C."/>
            <person name="Siden-Kiamos I."/>
            <person name="Simpson M."/>
            <person name="Skupski M.P."/>
            <person name="Smith T.J."/>
            <person name="Spier E."/>
            <person name="Spradling A.C."/>
            <person name="Stapleton M."/>
            <person name="Strong R."/>
            <person name="Sun E."/>
            <person name="Svirskas R."/>
            <person name="Tector C."/>
            <person name="Turner R."/>
            <person name="Venter E."/>
            <person name="Wang A.H."/>
            <person name="Wang X."/>
            <person name="Wang Z.-Y."/>
            <person name="Wassarman D.A."/>
            <person name="Weinstock G.M."/>
            <person name="Weissenbach J."/>
            <person name="Williams S.M."/>
            <person name="Woodage T."/>
            <person name="Worley K.C."/>
            <person name="Wu D."/>
            <person name="Yang S."/>
            <person name="Yao Q.A."/>
            <person name="Ye J."/>
            <person name="Yeh R.-F."/>
            <person name="Zaveri J.S."/>
            <person name="Zhan M."/>
            <person name="Zhang G."/>
            <person name="Zhao Q."/>
            <person name="Zheng L."/>
            <person name="Zheng X.H."/>
            <person name="Zhong F.N."/>
            <person name="Zhong W."/>
            <person name="Zhou X."/>
            <person name="Zhu S.C."/>
            <person name="Zhu X."/>
            <person name="Smith H.O."/>
            <person name="Gibbs R.A."/>
            <person name="Myers E.W."/>
            <person name="Rubin G.M."/>
            <person name="Venter J.C."/>
        </authorList>
    </citation>
    <scope>NUCLEOTIDE SEQUENCE [LARGE SCALE GENOMIC DNA]</scope>
    <source>
        <strain>Berkeley</strain>
    </source>
</reference>
<reference key="3">
    <citation type="journal article" date="2002" name="Genome Biol.">
        <title>Annotation of the Drosophila melanogaster euchromatic genome: a systematic review.</title>
        <authorList>
            <person name="Misra S."/>
            <person name="Crosby M.A."/>
            <person name="Mungall C.J."/>
            <person name="Matthews B.B."/>
            <person name="Campbell K.S."/>
            <person name="Hradecky P."/>
            <person name="Huang Y."/>
            <person name="Kaminker J.S."/>
            <person name="Millburn G.H."/>
            <person name="Prochnik S.E."/>
            <person name="Smith C.D."/>
            <person name="Tupy J.L."/>
            <person name="Whitfield E.J."/>
            <person name="Bayraktaroglu L."/>
            <person name="Berman B.P."/>
            <person name="Bettencourt B.R."/>
            <person name="Celniker S.E."/>
            <person name="de Grey A.D.N.J."/>
            <person name="Drysdale R.A."/>
            <person name="Harris N.L."/>
            <person name="Richter J."/>
            <person name="Russo S."/>
            <person name="Schroeder A.J."/>
            <person name="Shu S.Q."/>
            <person name="Stapleton M."/>
            <person name="Yamada C."/>
            <person name="Ashburner M."/>
            <person name="Gelbart W.M."/>
            <person name="Rubin G.M."/>
            <person name="Lewis S.E."/>
        </authorList>
    </citation>
    <scope>GENOME REANNOTATION</scope>
    <source>
        <strain>Berkeley</strain>
    </source>
</reference>
<reference key="4">
    <citation type="journal article" date="2002" name="Genome Biol.">
        <title>A Drosophila full-length cDNA resource.</title>
        <authorList>
            <person name="Stapleton M."/>
            <person name="Carlson J.W."/>
            <person name="Brokstein P."/>
            <person name="Yu C."/>
            <person name="Champe M."/>
            <person name="George R.A."/>
            <person name="Guarin H."/>
            <person name="Kronmiller B."/>
            <person name="Pacleb J.M."/>
            <person name="Park S."/>
            <person name="Wan K.H."/>
            <person name="Rubin G.M."/>
            <person name="Celniker S.E."/>
        </authorList>
    </citation>
    <scope>NUCLEOTIDE SEQUENCE [LARGE SCALE MRNA]</scope>
    <source>
        <strain>Berkeley</strain>
        <tissue>Embryo</tissue>
    </source>
</reference>
<reference key="5">
    <citation type="journal article" date="2008" name="J. Proteome Res.">
        <title>Phosphoproteome analysis of Drosophila melanogaster embryos.</title>
        <authorList>
            <person name="Zhai B."/>
            <person name="Villen J."/>
            <person name="Beausoleil S.A."/>
            <person name="Mintseris J."/>
            <person name="Gygi S.P."/>
        </authorList>
    </citation>
    <scope>PHOSPHORYLATION [LARGE SCALE ANALYSIS] AT SER-235; SER-456; SER-459; SER-682 AND SER-686</scope>
    <scope>IDENTIFICATION BY MASS SPECTROMETRY</scope>
    <source>
        <tissue>Embryo</tissue>
    </source>
</reference>